<comment type="function">
    <text evidence="3">Bifunctional enzyme with both ATP sulfurylase and APS kinase activity, which mediates two steps in the sulfate activation pathway (PubMed:16497669). The first step is the transfer of a sulfate group to ATP to yield adenosine 5'-phosphosulfate (APS), and the second step is the transfer of a phosphate group from ATP to APS yielding 3'-phosphoadenylylsulfate (PAPS: activated sulfate donor used by sulfotransferase) (PubMed:16497669). Required for normal growth and development (PubMed:16497669). Involved in several aspects of both embryonic and postembryonic development, including molting, changes in cell shape, and patterning of epithelial and muscle cells (PubMed:16497669).</text>
</comment>
<comment type="catalytic activity">
    <reaction evidence="3">
        <text>sulfate + ATP + H(+) = adenosine 5'-phosphosulfate + diphosphate</text>
        <dbReference type="Rhea" id="RHEA:18133"/>
        <dbReference type="ChEBI" id="CHEBI:15378"/>
        <dbReference type="ChEBI" id="CHEBI:16189"/>
        <dbReference type="ChEBI" id="CHEBI:30616"/>
        <dbReference type="ChEBI" id="CHEBI:33019"/>
        <dbReference type="ChEBI" id="CHEBI:58243"/>
        <dbReference type="EC" id="2.7.7.4"/>
    </reaction>
</comment>
<comment type="catalytic activity">
    <reaction evidence="3">
        <text>adenosine 5'-phosphosulfate + ATP = 3'-phosphoadenylyl sulfate + ADP + H(+)</text>
        <dbReference type="Rhea" id="RHEA:24152"/>
        <dbReference type="ChEBI" id="CHEBI:15378"/>
        <dbReference type="ChEBI" id="CHEBI:30616"/>
        <dbReference type="ChEBI" id="CHEBI:58243"/>
        <dbReference type="ChEBI" id="CHEBI:58339"/>
        <dbReference type="ChEBI" id="CHEBI:456216"/>
        <dbReference type="EC" id="2.7.1.25"/>
    </reaction>
</comment>
<comment type="pathway">
    <text evidence="4">Sulfur metabolism; sulfate assimilation.</text>
</comment>
<comment type="subcellular location">
    <subcellularLocation>
        <location evidence="3">Nucleus</location>
    </subcellularLocation>
</comment>
<comment type="alternative products">
    <event type="alternative splicing"/>
    <isoform>
        <id>A0A061AE05-1</id>
        <name evidence="9">b</name>
        <sequence type="displayed"/>
    </isoform>
    <isoform>
        <id>A0A061AE05-2</id>
        <name evidence="8">a</name>
        <sequence type="described" ref="VSP_061753"/>
    </isoform>
</comment>
<comment type="developmental stage">
    <text evidence="3">Widely expressed in epidermal cells, gland cells and in amphid sheath cells throughout development, but not in muscle cells and neurons.</text>
</comment>
<comment type="disruption phenotype">
    <text evidence="3">Lethal phenotype (PubMed:16497669). Embryos hatch, initiate growth and development, but arrest at the L2 or L3 larval stages (PubMed:16497669). Abnormal cuticle (PubMed:16497669). RNAi-mediated knockdown causes a 42% decrease in 3'-phosphoadenosine 5'-phosphosulfate (PAPS) synthesis activity (PubMed:16497669). Reduced sulfation of disaccharides of heparan sulfate (HS) proteoglycans (PubMed:16497669). Defects in cell shape of epidermis and patterning of body wall muscle cells (PubMed:16497669). Some phenotypes only observed when grown at 25 degrees Celsius; such as shortened malformed tail, exacerbated molting defects, blistering, and sterility (PubMed:16497669).</text>
</comment>
<comment type="similarity">
    <text evidence="5">In the N-terminal section; belongs to the APS kinase family.</text>
</comment>
<comment type="similarity">
    <text evidence="5">In the C-terminal section; belongs to the sulfate adenylyltransferase family.</text>
</comment>
<proteinExistence type="evidence at protein level"/>
<accession>A0A061AE05</accession>
<accession>Q22501</accession>
<reference evidence="7" key="1">
    <citation type="journal article" date="1998" name="Science">
        <title>Genome sequence of the nematode C. elegans: a platform for investigating biology.</title>
        <authorList>
            <consortium name="The C. elegans sequencing consortium"/>
        </authorList>
    </citation>
    <scope>NUCLEOTIDE SEQUENCE [LARGE SCALE GENOMIC DNA]</scope>
    <source>
        <strain evidence="7">Bristol N2</strain>
    </source>
</reference>
<reference evidence="5" key="2">
    <citation type="journal article" date="2006" name="J. Biol. Chem.">
        <title>Essential roles of 3'-phosphoadenosine 5'-phosphosulfate synthase in embryonic and larval development of the nematode Caenorhabditis elegans.</title>
        <authorList>
            <person name="Dejima K."/>
            <person name="Seko A."/>
            <person name="Yamashita K."/>
            <person name="Gengyo-Ando K."/>
            <person name="Mitani S."/>
            <person name="Izumikawa T."/>
            <person name="Kitagawa H."/>
            <person name="Sugahara K."/>
            <person name="Mizuguchi S."/>
            <person name="Nomura K."/>
        </authorList>
    </citation>
    <scope>FUNCTION</scope>
    <scope>CATALYTIC ACTIVITY</scope>
    <scope>PATHWAY</scope>
    <scope>SUBCELLULAR LOCATION</scope>
    <scope>DEVELOPMENTAL STAGE</scope>
    <scope>DISRUPTION PHENOTYPE</scope>
</reference>
<gene>
    <name evidence="9" type="primary">pps-1</name>
    <name evidence="9" type="ORF">T14G10.1</name>
</gene>
<evidence type="ECO:0000250" key="1">
    <source>
        <dbReference type="UniProtKB" id="O43252"/>
    </source>
</evidence>
<evidence type="ECO:0000256" key="2">
    <source>
        <dbReference type="SAM" id="MobiDB-lite"/>
    </source>
</evidence>
<evidence type="ECO:0000269" key="3">
    <source>
    </source>
</evidence>
<evidence type="ECO:0000303" key="4">
    <source>
    </source>
</evidence>
<evidence type="ECO:0000305" key="5"/>
<evidence type="ECO:0000305" key="6">
    <source>
    </source>
</evidence>
<evidence type="ECO:0000312" key="7">
    <source>
        <dbReference type="Proteomes" id="UP000001940"/>
    </source>
</evidence>
<evidence type="ECO:0000312" key="8">
    <source>
        <dbReference type="WormBase" id="T14G10.1a"/>
    </source>
</evidence>
<evidence type="ECO:0000312" key="9">
    <source>
        <dbReference type="WormBase" id="T14G10.1b"/>
    </source>
</evidence>
<feature type="chain" id="PRO_0000457177" description="Bifunctional 3'-phosphoadenosine 5'-phosphosulfate synthase pps-1">
    <location>
        <begin position="1"/>
        <end position="654"/>
    </location>
</feature>
<feature type="region of interest" description="Adenylyl-sulfate kinase" evidence="1">
    <location>
        <begin position="1"/>
        <end position="231"/>
    </location>
</feature>
<feature type="region of interest" description="Disordered" evidence="2">
    <location>
        <begin position="1"/>
        <end position="26"/>
    </location>
</feature>
<feature type="region of interest" description="Sulfate adenylyltransferase" evidence="1">
    <location>
        <begin position="242"/>
        <end position="653"/>
    </location>
</feature>
<feature type="binding site" evidence="1">
    <location>
        <begin position="66"/>
        <end position="71"/>
    </location>
    <ligand>
        <name>ATP</name>
        <dbReference type="ChEBI" id="CHEBI:30616"/>
        <label>1</label>
    </ligand>
</feature>
<feature type="binding site" evidence="1">
    <location>
        <begin position="93"/>
        <end position="96"/>
    </location>
    <ligand>
        <name>adenosine 5'-phosphosulfate</name>
        <dbReference type="ChEBI" id="CHEBI:58243"/>
    </ligand>
</feature>
<feature type="binding site" evidence="1">
    <location>
        <position position="105"/>
    </location>
    <ligand>
        <name>adenosine 5'-phosphosulfate</name>
        <dbReference type="ChEBI" id="CHEBI:58243"/>
    </ligand>
</feature>
<feature type="binding site" evidence="1">
    <location>
        <begin position="110"/>
        <end position="113"/>
    </location>
    <ligand>
        <name>adenosine 5'-phosphosulfate</name>
        <dbReference type="ChEBI" id="CHEBI:58243"/>
    </ligand>
</feature>
<feature type="binding site" evidence="1">
    <location>
        <begin position="136"/>
        <end position="137"/>
    </location>
    <ligand>
        <name>adenosine 5'-phosphosulfate</name>
        <dbReference type="ChEBI" id="CHEBI:58243"/>
    </ligand>
</feature>
<feature type="binding site" evidence="1">
    <location>
        <position position="175"/>
    </location>
    <ligand>
        <name>adenosine 5'-phosphosulfate</name>
        <dbReference type="ChEBI" id="CHEBI:58243"/>
    </ligand>
</feature>
<feature type="binding site" evidence="1">
    <location>
        <begin position="190"/>
        <end position="191"/>
    </location>
    <ligand>
        <name>adenosine 5'-phosphosulfate</name>
        <dbReference type="ChEBI" id="CHEBI:58243"/>
    </ligand>
</feature>
<feature type="binding site" evidence="1">
    <location>
        <position position="218"/>
    </location>
    <ligand>
        <name>ATP</name>
        <dbReference type="ChEBI" id="CHEBI:30616"/>
        <label>1</label>
    </ligand>
</feature>
<feature type="binding site" evidence="1">
    <location>
        <begin position="449"/>
        <end position="452"/>
    </location>
    <ligand>
        <name>ATP</name>
        <dbReference type="ChEBI" id="CHEBI:30616"/>
        <label>2</label>
    </ligand>
</feature>
<feature type="binding site" evidence="1">
    <location>
        <begin position="550"/>
        <end position="554"/>
    </location>
    <ligand>
        <name>ATP</name>
        <dbReference type="ChEBI" id="CHEBI:30616"/>
        <label>2</label>
    </ligand>
</feature>
<feature type="binding site" evidence="1">
    <location>
        <position position="592"/>
    </location>
    <ligand>
        <name>ATP</name>
        <dbReference type="ChEBI" id="CHEBI:30616"/>
        <label>2</label>
    </ligand>
</feature>
<feature type="splice variant" id="VSP_061753" description="In isoform a." evidence="5">
    <original>PSE</original>
    <variation>Q</variation>
    <location>
        <begin position="176"/>
        <end position="178"/>
    </location>
</feature>
<dbReference type="EC" id="2.7.7.4" evidence="3"/>
<dbReference type="EC" id="2.7.1.25" evidence="3"/>
<dbReference type="EMBL" id="BX284604">
    <property type="protein sequence ID" value="CAA93098.1"/>
    <property type="molecule type" value="Genomic_DNA"/>
</dbReference>
<dbReference type="EMBL" id="BX284604">
    <property type="protein sequence ID" value="CDR32729.1"/>
    <property type="molecule type" value="Genomic_DNA"/>
</dbReference>
<dbReference type="PIR" id="T24918">
    <property type="entry name" value="T24918"/>
</dbReference>
<dbReference type="RefSeq" id="NP_001293960.1">
    <molecule id="A0A061AE05-1"/>
    <property type="nucleotide sequence ID" value="NM_001307031.3"/>
</dbReference>
<dbReference type="RefSeq" id="NP_501857.1">
    <molecule id="A0A061AE05-2"/>
    <property type="nucleotide sequence ID" value="NM_069456.5"/>
</dbReference>
<dbReference type="SMR" id="A0A061AE05"/>
<dbReference type="FunCoup" id="A0A061AE05">
    <property type="interactions" value="2127"/>
</dbReference>
<dbReference type="STRING" id="6239.T14G10.1b.1"/>
<dbReference type="PaxDb" id="6239-T14G10.1"/>
<dbReference type="EnsemblMetazoa" id="T14G10.1a.1">
    <molecule id="A0A061AE05-2"/>
    <property type="protein sequence ID" value="T14G10.1a.1"/>
    <property type="gene ID" value="WBGene00004091"/>
</dbReference>
<dbReference type="EnsemblMetazoa" id="T14G10.1b.1">
    <molecule id="A0A061AE05-1"/>
    <property type="protein sequence ID" value="T14G10.1b.1"/>
    <property type="gene ID" value="WBGene00004091"/>
</dbReference>
<dbReference type="GeneID" id="177893"/>
<dbReference type="KEGG" id="cel:CELE_T14G10.1"/>
<dbReference type="UCSC" id="T14G10.1">
    <property type="organism name" value="c. elegans"/>
</dbReference>
<dbReference type="AGR" id="WB:WBGene00004091"/>
<dbReference type="CTD" id="177893"/>
<dbReference type="WormBase" id="T14G10.1a">
    <molecule id="A0A061AE05-2"/>
    <property type="protein sequence ID" value="CE06447"/>
    <property type="gene ID" value="WBGene00004091"/>
    <property type="gene designation" value="pps-1"/>
</dbReference>
<dbReference type="WormBase" id="T14G10.1b">
    <molecule id="A0A061AE05-1"/>
    <property type="protein sequence ID" value="CE49754"/>
    <property type="gene ID" value="WBGene00004091"/>
    <property type="gene designation" value="pps-1"/>
</dbReference>
<dbReference type="eggNOG" id="KOG4238">
    <property type="taxonomic scope" value="Eukaryota"/>
</dbReference>
<dbReference type="GeneTree" id="ENSGT00390000009613"/>
<dbReference type="HOGENOM" id="CLU_009463_3_0_1"/>
<dbReference type="InParanoid" id="A0A061AE05"/>
<dbReference type="OMA" id="IEIYKHH"/>
<dbReference type="OrthoDB" id="506431at2759"/>
<dbReference type="Reactome" id="R-CEL-174362">
    <property type="pathway name" value="Transport and synthesis of PAPS"/>
</dbReference>
<dbReference type="UniPathway" id="UPA00097"/>
<dbReference type="PRO" id="PR:A0A061AE05"/>
<dbReference type="Proteomes" id="UP000001940">
    <property type="component" value="Chromosome IV"/>
</dbReference>
<dbReference type="Bgee" id="WBGene00004091">
    <property type="expression patterns" value="Expressed in germ line (C elegans) and 4 other cell types or tissues"/>
</dbReference>
<dbReference type="ExpressionAtlas" id="A0A061AE05">
    <property type="expression patterns" value="baseline and differential"/>
</dbReference>
<dbReference type="GO" id="GO:0005634">
    <property type="term" value="C:nucleus"/>
    <property type="evidence" value="ECO:0007669"/>
    <property type="project" value="UniProtKB-SubCell"/>
</dbReference>
<dbReference type="GO" id="GO:0004020">
    <property type="term" value="F:adenylylsulfate kinase activity"/>
    <property type="evidence" value="ECO:0000318"/>
    <property type="project" value="GO_Central"/>
</dbReference>
<dbReference type="GO" id="GO:0005524">
    <property type="term" value="F:ATP binding"/>
    <property type="evidence" value="ECO:0007669"/>
    <property type="project" value="UniProtKB-KW"/>
</dbReference>
<dbReference type="GO" id="GO:0004781">
    <property type="term" value="F:sulfate adenylyltransferase (ATP) activity"/>
    <property type="evidence" value="ECO:0007669"/>
    <property type="project" value="UniProtKB-EC"/>
</dbReference>
<dbReference type="GO" id="GO:0050428">
    <property type="term" value="P:3'-phosphoadenosine 5'-phosphosulfate biosynthetic process"/>
    <property type="evidence" value="ECO:0000318"/>
    <property type="project" value="GO_Central"/>
</dbReference>
<dbReference type="GO" id="GO:0000103">
    <property type="term" value="P:sulfate assimilation"/>
    <property type="evidence" value="ECO:0000318"/>
    <property type="project" value="GO_Central"/>
</dbReference>
<dbReference type="CDD" id="cd02027">
    <property type="entry name" value="APSK"/>
    <property type="match status" value="1"/>
</dbReference>
<dbReference type="CDD" id="cd00517">
    <property type="entry name" value="ATPS"/>
    <property type="match status" value="1"/>
</dbReference>
<dbReference type="FunFam" id="3.40.50.300:FF:000212">
    <property type="entry name" value="Adenylyl-sulfate kinase"/>
    <property type="match status" value="1"/>
</dbReference>
<dbReference type="FunFam" id="3.40.50.620:FF:000006">
    <property type="entry name" value="bifunctional 3'-phosphoadenosine 5'-phosphosulfate synthase 1"/>
    <property type="match status" value="1"/>
</dbReference>
<dbReference type="FunFam" id="3.10.400.10:FF:000004">
    <property type="entry name" value="PAPS synthetase, isoform D"/>
    <property type="match status" value="1"/>
</dbReference>
<dbReference type="Gene3D" id="3.40.50.620">
    <property type="entry name" value="HUPs"/>
    <property type="match status" value="1"/>
</dbReference>
<dbReference type="Gene3D" id="3.40.50.300">
    <property type="entry name" value="P-loop containing nucleotide triphosphate hydrolases"/>
    <property type="match status" value="1"/>
</dbReference>
<dbReference type="Gene3D" id="3.10.400.10">
    <property type="entry name" value="Sulfate adenylyltransferase"/>
    <property type="match status" value="1"/>
</dbReference>
<dbReference type="HAMAP" id="MF_00065">
    <property type="entry name" value="Adenylyl_sulf_kinase"/>
    <property type="match status" value="1"/>
</dbReference>
<dbReference type="InterPro" id="IPR002891">
    <property type="entry name" value="APS_kinase"/>
</dbReference>
<dbReference type="InterPro" id="IPR025980">
    <property type="entry name" value="ATP-Sase_PUA-like_dom"/>
</dbReference>
<dbReference type="InterPro" id="IPR027417">
    <property type="entry name" value="P-loop_NTPase"/>
</dbReference>
<dbReference type="InterPro" id="IPR015947">
    <property type="entry name" value="PUA-like_sf"/>
</dbReference>
<dbReference type="InterPro" id="IPR014729">
    <property type="entry name" value="Rossmann-like_a/b/a_fold"/>
</dbReference>
<dbReference type="InterPro" id="IPR024951">
    <property type="entry name" value="Sulfurylase_cat_dom"/>
</dbReference>
<dbReference type="InterPro" id="IPR002650">
    <property type="entry name" value="Sulphate_adenylyltransferase"/>
</dbReference>
<dbReference type="NCBIfam" id="TIGR00455">
    <property type="entry name" value="apsK"/>
    <property type="match status" value="1"/>
</dbReference>
<dbReference type="NCBIfam" id="NF003013">
    <property type="entry name" value="PRK03846.1"/>
    <property type="match status" value="1"/>
</dbReference>
<dbReference type="PANTHER" id="PTHR11055">
    <property type="entry name" value="BIFUNCTIONAL 3'-PHOSPHOADENOSINE 5'-PHOSPHOSULFATE SYNTHASE"/>
    <property type="match status" value="1"/>
</dbReference>
<dbReference type="PANTHER" id="PTHR11055:SF1">
    <property type="entry name" value="PAPS SYNTHETASE, ISOFORM D"/>
    <property type="match status" value="1"/>
</dbReference>
<dbReference type="Pfam" id="PF01583">
    <property type="entry name" value="APS_kinase"/>
    <property type="match status" value="1"/>
</dbReference>
<dbReference type="Pfam" id="PF01747">
    <property type="entry name" value="ATP-sulfurylase"/>
    <property type="match status" value="1"/>
</dbReference>
<dbReference type="Pfam" id="PF14306">
    <property type="entry name" value="PUA_2"/>
    <property type="match status" value="1"/>
</dbReference>
<dbReference type="SUPFAM" id="SSF52374">
    <property type="entry name" value="Nucleotidylyl transferase"/>
    <property type="match status" value="1"/>
</dbReference>
<dbReference type="SUPFAM" id="SSF52540">
    <property type="entry name" value="P-loop containing nucleoside triphosphate hydrolases"/>
    <property type="match status" value="1"/>
</dbReference>
<dbReference type="SUPFAM" id="SSF88697">
    <property type="entry name" value="PUA domain-like"/>
    <property type="match status" value="1"/>
</dbReference>
<protein>
    <recommendedName>
        <fullName evidence="6">Bifunctional 3'-phosphoadenosine 5'-phosphosulfate synthase pps-1</fullName>
    </recommendedName>
    <domain>
        <recommendedName>
            <fullName evidence="6">Sulfate adenylyltransferase</fullName>
            <ecNumber evidence="3">2.7.7.4</ecNumber>
        </recommendedName>
    </domain>
    <domain>
        <recommendedName>
            <fullName evidence="6">Adenylyl-sulfate kinase</fullName>
            <ecNumber evidence="3">2.7.1.25</ecNumber>
        </recommendedName>
    </domain>
</protein>
<organism evidence="7">
    <name type="scientific">Caenorhabditis elegans</name>
    <dbReference type="NCBI Taxonomy" id="6239"/>
    <lineage>
        <taxon>Eukaryota</taxon>
        <taxon>Metazoa</taxon>
        <taxon>Ecdysozoa</taxon>
        <taxon>Nematoda</taxon>
        <taxon>Chromadorea</taxon>
        <taxon>Rhabditida</taxon>
        <taxon>Rhabditina</taxon>
        <taxon>Rhabditomorpha</taxon>
        <taxon>Rhabditoidea</taxon>
        <taxon>Rhabditidae</taxon>
        <taxon>Peloderinae</taxon>
        <taxon>Caenorhabditis</taxon>
    </lineage>
</organism>
<keyword id="KW-0025">Alternative splicing</keyword>
<keyword id="KW-0067">ATP-binding</keyword>
<keyword id="KW-0217">Developmental protein</keyword>
<keyword id="KW-0418">Kinase</keyword>
<keyword id="KW-0511">Multifunctional enzyme</keyword>
<keyword id="KW-0547">Nucleotide-binding</keyword>
<keyword id="KW-0548">Nucleotidyltransferase</keyword>
<keyword id="KW-0539">Nucleus</keyword>
<keyword id="KW-1185">Reference proteome</keyword>
<keyword id="KW-0808">Transferase</keyword>
<name>PAPSH_CAEEL</name>
<sequence length="654" mass="73172">MLTPRDENNEGDAMPMLKKPRYSSLSGQSTNITYQEHTISREERAAAVGRHEGFRGCTIWFTGLSGAGKTTISFALERTLNKLGIPCYGLDGDNIRHGLCKNLGFSKEDRQENIRRVAEVAKLFADSGMICLAAFISPFQEDRLDARKIHESENVKFIEVHVSTTLEVCEQRDPKPSELYKKARAGQILGFTGIDSAYEPPENAEIILDAGKDGVQQCVQKVLDHLESKGLLPEQIPDVPAVRELFVSDDLTVAELLKESQNLPTVELTKVDLQWLQVLAEGWATPLSGFMRERQYLQSMHFGQLLDLKHKVAFVGEKSDDKEDSWPMMDDINQSIPIVLPISDDVKKGLEGVTRIALKYNGQVYAILSDPEIFEHRKDERVCRQFGTNDPRHPAVAQVLESGNWLLGGDVAVVQKIQFNDGLDKYRKTPNELRAIFAEKNADAVFAFQLRNPIHNGHALLMRDTREKLLAEHKNPILLLHPLGGWTKDDDVPLDIRIKQHEAVIAERVLDPEWTVLSIFPSPMMYAGPTEVQWHARSRIAAGIQHYIVGRDPAGIQKPGSPDALYETTHGAKVLSMAPGLSALHILPFRVAAYDKTAKKMSFFDTSRKEDFENISGTKMRGLARNGDTPPEGFMAPTAWEVLAGYYKSLQNSN</sequence>